<sequence length="448" mass="46537">MSRLTCLAFPGRSIPMAVLERLSVAARELPASVRALRAVPGVDQVLVLSTCERTEVYAWWTDEADPAALLRALAGQRGLGPEPLLEHAVGLTGREAVQHLLRVTAGLDSFVRGESDIVGQVRAAVQAARAEGAVGLEVQRLVDAAVNTSRRVHRSTGAGLAAGSVASTAVAAVAGLLPDGLAGRDLLVVGTGQVAVSVVAAAREAGARLTVCGRDPERAAAIAPAGARVLGLDDLPGALLDADAVVFGTSSPERLLRAGDLGPGLSEHRSGRELVVVDLCVPRNVDPDVRGVPGVRLLDLTDLRGAAVPGRRPSAPAPAALELAEQIVAQEVDRFLHWWVDRAAAEPVRRLRADVEACVREEVARATRGLSPDLEPLVAEGIRRAVQHLAHGPTRRLLDAAAAGEDEVVALLAGLFAPSAEEDQAVPAYSPQPIGNTSNAAASATPRR</sequence>
<keyword id="KW-0521">NADP</keyword>
<keyword id="KW-0560">Oxidoreductase</keyword>
<keyword id="KW-0627">Porphyrin biosynthesis</keyword>
<keyword id="KW-1185">Reference proteome</keyword>
<accession>A1SI37</accession>
<organism>
    <name type="scientific">Nocardioides sp. (strain ATCC BAA-499 / JS614)</name>
    <dbReference type="NCBI Taxonomy" id="196162"/>
    <lineage>
        <taxon>Bacteria</taxon>
        <taxon>Bacillati</taxon>
        <taxon>Actinomycetota</taxon>
        <taxon>Actinomycetes</taxon>
        <taxon>Propionibacteriales</taxon>
        <taxon>Nocardioidaceae</taxon>
        <taxon>Nocardioides</taxon>
    </lineage>
</organism>
<dbReference type="EC" id="1.2.1.70" evidence="1"/>
<dbReference type="EMBL" id="CP000509">
    <property type="protein sequence ID" value="ABL81472.1"/>
    <property type="molecule type" value="Genomic_DNA"/>
</dbReference>
<dbReference type="SMR" id="A1SI37"/>
<dbReference type="STRING" id="196162.Noca_1962"/>
<dbReference type="KEGG" id="nca:Noca_1962"/>
<dbReference type="eggNOG" id="COG0373">
    <property type="taxonomic scope" value="Bacteria"/>
</dbReference>
<dbReference type="HOGENOM" id="CLU_035113_4_1_11"/>
<dbReference type="OrthoDB" id="110209at2"/>
<dbReference type="UniPathway" id="UPA00251">
    <property type="reaction ID" value="UER00316"/>
</dbReference>
<dbReference type="Proteomes" id="UP000000640">
    <property type="component" value="Chromosome"/>
</dbReference>
<dbReference type="GO" id="GO:0008883">
    <property type="term" value="F:glutamyl-tRNA reductase activity"/>
    <property type="evidence" value="ECO:0007669"/>
    <property type="project" value="UniProtKB-UniRule"/>
</dbReference>
<dbReference type="GO" id="GO:0050661">
    <property type="term" value="F:NADP binding"/>
    <property type="evidence" value="ECO:0007669"/>
    <property type="project" value="InterPro"/>
</dbReference>
<dbReference type="GO" id="GO:0019353">
    <property type="term" value="P:protoporphyrinogen IX biosynthetic process from glutamate"/>
    <property type="evidence" value="ECO:0007669"/>
    <property type="project" value="TreeGrafter"/>
</dbReference>
<dbReference type="Gene3D" id="3.30.460.30">
    <property type="entry name" value="Glutamyl-tRNA reductase, N-terminal domain"/>
    <property type="match status" value="1"/>
</dbReference>
<dbReference type="Gene3D" id="3.40.50.720">
    <property type="entry name" value="NAD(P)-binding Rossmann-like Domain"/>
    <property type="match status" value="1"/>
</dbReference>
<dbReference type="HAMAP" id="MF_00087">
    <property type="entry name" value="Glu_tRNA_reductase"/>
    <property type="match status" value="1"/>
</dbReference>
<dbReference type="InterPro" id="IPR000343">
    <property type="entry name" value="4pyrrol_synth_GluRdtase"/>
</dbReference>
<dbReference type="InterPro" id="IPR015896">
    <property type="entry name" value="4pyrrol_synth_GluRdtase_dimer"/>
</dbReference>
<dbReference type="InterPro" id="IPR015895">
    <property type="entry name" value="4pyrrol_synth_GluRdtase_N"/>
</dbReference>
<dbReference type="InterPro" id="IPR036453">
    <property type="entry name" value="GluRdtase_dimer_dom_sf"/>
</dbReference>
<dbReference type="InterPro" id="IPR036343">
    <property type="entry name" value="GluRdtase_N_sf"/>
</dbReference>
<dbReference type="InterPro" id="IPR036291">
    <property type="entry name" value="NAD(P)-bd_dom_sf"/>
</dbReference>
<dbReference type="InterPro" id="IPR006151">
    <property type="entry name" value="Shikm_DH/Glu-tRNA_Rdtase"/>
</dbReference>
<dbReference type="NCBIfam" id="TIGR01035">
    <property type="entry name" value="hemA"/>
    <property type="match status" value="1"/>
</dbReference>
<dbReference type="PANTHER" id="PTHR43013">
    <property type="entry name" value="GLUTAMYL-TRNA REDUCTASE"/>
    <property type="match status" value="1"/>
</dbReference>
<dbReference type="PANTHER" id="PTHR43013:SF1">
    <property type="entry name" value="GLUTAMYL-TRNA REDUCTASE"/>
    <property type="match status" value="1"/>
</dbReference>
<dbReference type="Pfam" id="PF00745">
    <property type="entry name" value="GlutR_dimer"/>
    <property type="match status" value="1"/>
</dbReference>
<dbReference type="Pfam" id="PF05201">
    <property type="entry name" value="GlutR_N"/>
    <property type="match status" value="1"/>
</dbReference>
<dbReference type="Pfam" id="PF01488">
    <property type="entry name" value="Shikimate_DH"/>
    <property type="match status" value="1"/>
</dbReference>
<dbReference type="PIRSF" id="PIRSF000445">
    <property type="entry name" value="4pyrrol_synth_GluRdtase"/>
    <property type="match status" value="1"/>
</dbReference>
<dbReference type="SUPFAM" id="SSF69742">
    <property type="entry name" value="Glutamyl tRNA-reductase catalytic, N-terminal domain"/>
    <property type="match status" value="1"/>
</dbReference>
<dbReference type="SUPFAM" id="SSF69075">
    <property type="entry name" value="Glutamyl tRNA-reductase dimerization domain"/>
    <property type="match status" value="1"/>
</dbReference>
<dbReference type="SUPFAM" id="SSF51735">
    <property type="entry name" value="NAD(P)-binding Rossmann-fold domains"/>
    <property type="match status" value="1"/>
</dbReference>
<protein>
    <recommendedName>
        <fullName evidence="1">Glutamyl-tRNA reductase 2</fullName>
        <shortName evidence="1">GluTR 2</shortName>
        <ecNumber evidence="1">1.2.1.70</ecNumber>
    </recommendedName>
</protein>
<proteinExistence type="inferred from homology"/>
<evidence type="ECO:0000255" key="1">
    <source>
        <dbReference type="HAMAP-Rule" id="MF_00087"/>
    </source>
</evidence>
<evidence type="ECO:0000256" key="2">
    <source>
        <dbReference type="SAM" id="MobiDB-lite"/>
    </source>
</evidence>
<reference key="1">
    <citation type="submission" date="2006-12" db="EMBL/GenBank/DDBJ databases">
        <title>Complete sequence of chromosome 1 of Nocardioides sp. JS614.</title>
        <authorList>
            <person name="Copeland A."/>
            <person name="Lucas S."/>
            <person name="Lapidus A."/>
            <person name="Barry K."/>
            <person name="Detter J.C."/>
            <person name="Glavina del Rio T."/>
            <person name="Hammon N."/>
            <person name="Israni S."/>
            <person name="Dalin E."/>
            <person name="Tice H."/>
            <person name="Pitluck S."/>
            <person name="Thompson L.S."/>
            <person name="Brettin T."/>
            <person name="Bruce D."/>
            <person name="Han C."/>
            <person name="Tapia R."/>
            <person name="Schmutz J."/>
            <person name="Larimer F."/>
            <person name="Land M."/>
            <person name="Hauser L."/>
            <person name="Kyrpides N."/>
            <person name="Kim E."/>
            <person name="Mattes T."/>
            <person name="Gossett J."/>
            <person name="Richardson P."/>
        </authorList>
    </citation>
    <scope>NUCLEOTIDE SEQUENCE [LARGE SCALE GENOMIC DNA]</scope>
    <source>
        <strain>ATCC BAA-499 / JS614</strain>
    </source>
</reference>
<name>HEM12_NOCSJ</name>
<comment type="function">
    <text evidence="1">Catalyzes the NADPH-dependent reduction of glutamyl-tRNA(Glu) to glutamate 1-semialdehyde (GSA).</text>
</comment>
<comment type="catalytic activity">
    <reaction evidence="1">
        <text>(S)-4-amino-5-oxopentanoate + tRNA(Glu) + NADP(+) = L-glutamyl-tRNA(Glu) + NADPH + H(+)</text>
        <dbReference type="Rhea" id="RHEA:12344"/>
        <dbReference type="Rhea" id="RHEA-COMP:9663"/>
        <dbReference type="Rhea" id="RHEA-COMP:9680"/>
        <dbReference type="ChEBI" id="CHEBI:15378"/>
        <dbReference type="ChEBI" id="CHEBI:57501"/>
        <dbReference type="ChEBI" id="CHEBI:57783"/>
        <dbReference type="ChEBI" id="CHEBI:58349"/>
        <dbReference type="ChEBI" id="CHEBI:78442"/>
        <dbReference type="ChEBI" id="CHEBI:78520"/>
        <dbReference type="EC" id="1.2.1.70"/>
    </reaction>
</comment>
<comment type="pathway">
    <text evidence="1">Porphyrin-containing compound metabolism; protoporphyrin-IX biosynthesis; 5-aminolevulinate from L-glutamyl-tRNA(Glu): step 1/2.</text>
</comment>
<comment type="subunit">
    <text evidence="1">Homodimer.</text>
</comment>
<comment type="domain">
    <text evidence="1">Possesses an unusual extended V-shaped dimeric structure with each monomer consisting of three distinct domains arranged along a curved 'spinal' alpha-helix. The N-terminal catalytic domain specifically recognizes the glutamate moiety of the substrate. The second domain is the NADPH-binding domain, and the third C-terminal domain is responsible for dimerization.</text>
</comment>
<comment type="miscellaneous">
    <text evidence="1">During catalysis, the active site Cys acts as a nucleophile attacking the alpha-carbonyl group of tRNA-bound glutamate with the formation of a thioester intermediate between enzyme and glutamate, and the concomitant release of tRNA(Glu). The thioester intermediate is finally reduced by direct hydride transfer from NADPH, to form the product GSA.</text>
</comment>
<comment type="similarity">
    <text evidence="1">Belongs to the glutamyl-tRNA reductase family.</text>
</comment>
<gene>
    <name evidence="1" type="primary">hemA2</name>
    <name type="ordered locus">Noca_1962</name>
</gene>
<feature type="chain" id="PRO_0000335056" description="Glutamyl-tRNA reductase 2">
    <location>
        <begin position="1"/>
        <end position="448"/>
    </location>
</feature>
<feature type="region of interest" description="Disordered" evidence="2">
    <location>
        <begin position="423"/>
        <end position="448"/>
    </location>
</feature>
<feature type="compositionally biased region" description="Polar residues" evidence="2">
    <location>
        <begin position="433"/>
        <end position="442"/>
    </location>
</feature>
<feature type="active site" description="Nucleophile" evidence="1">
    <location>
        <position position="51"/>
    </location>
</feature>
<feature type="binding site" evidence="1">
    <location>
        <begin position="50"/>
        <end position="53"/>
    </location>
    <ligand>
        <name>substrate</name>
    </ligand>
</feature>
<feature type="binding site" evidence="1">
    <location>
        <position position="109"/>
    </location>
    <ligand>
        <name>substrate</name>
    </ligand>
</feature>
<feature type="binding site" evidence="1">
    <location>
        <begin position="114"/>
        <end position="116"/>
    </location>
    <ligand>
        <name>substrate</name>
    </ligand>
</feature>
<feature type="binding site" evidence="1">
    <location>
        <position position="120"/>
    </location>
    <ligand>
        <name>substrate</name>
    </ligand>
</feature>
<feature type="binding site" evidence="1">
    <location>
        <begin position="190"/>
        <end position="195"/>
    </location>
    <ligand>
        <name>NADP(+)</name>
        <dbReference type="ChEBI" id="CHEBI:58349"/>
    </ligand>
</feature>
<feature type="site" description="Important for activity" evidence="1">
    <location>
        <position position="99"/>
    </location>
</feature>